<evidence type="ECO:0000250" key="1"/>
<evidence type="ECO:0000255" key="2">
    <source>
        <dbReference type="PROSITE-ProRule" id="PRU01133"/>
    </source>
</evidence>
<evidence type="ECO:0000305" key="3"/>
<feature type="chain" id="PRO_0000211274" description="Translationally-controlled tumor protein homolog">
    <location>
        <begin position="1"/>
        <end position="171"/>
    </location>
</feature>
<feature type="domain" description="TCTP" evidence="2">
    <location>
        <begin position="1"/>
        <end position="171"/>
    </location>
</feature>
<feature type="sequence conflict" description="In Ref. 2; AAH49059." evidence="3" ref="2">
    <original>F</original>
    <variation>S</variation>
    <location>
        <position position="161"/>
    </location>
</feature>
<name>TCTP_DANRE</name>
<comment type="function">
    <text evidence="1">Involved in calcium binding and microtubule stabilization.</text>
</comment>
<comment type="subcellular location">
    <subcellularLocation>
        <location evidence="1">Cytoplasm</location>
    </subcellularLocation>
</comment>
<comment type="similarity">
    <text evidence="2">Belongs to the TCTP family.</text>
</comment>
<reference key="1">
    <citation type="submission" date="2000-07" db="EMBL/GenBank/DDBJ databases">
        <title>The zebrafish gene encoding the translationally-controlled tumor protein 1 (tct1) is ubiquitously expressed during early development.</title>
        <authorList>
            <person name="Good P.J."/>
        </authorList>
    </citation>
    <scope>NUCLEOTIDE SEQUENCE [MRNA]</scope>
</reference>
<reference key="2">
    <citation type="submission" date="2003-03" db="EMBL/GenBank/DDBJ databases">
        <authorList>
            <consortium name="NIH - Zebrafish Gene Collection (ZGC) project"/>
        </authorList>
    </citation>
    <scope>NUCLEOTIDE SEQUENCE [LARGE SCALE MRNA]</scope>
</reference>
<protein>
    <recommendedName>
        <fullName>Translationally-controlled tumor protein homolog</fullName>
        <shortName>TCTP</shortName>
    </recommendedName>
</protein>
<organism>
    <name type="scientific">Danio rerio</name>
    <name type="common">Zebrafish</name>
    <name type="synonym">Brachydanio rerio</name>
    <dbReference type="NCBI Taxonomy" id="7955"/>
    <lineage>
        <taxon>Eukaryota</taxon>
        <taxon>Metazoa</taxon>
        <taxon>Chordata</taxon>
        <taxon>Craniata</taxon>
        <taxon>Vertebrata</taxon>
        <taxon>Euteleostomi</taxon>
        <taxon>Actinopterygii</taxon>
        <taxon>Neopterygii</taxon>
        <taxon>Teleostei</taxon>
        <taxon>Ostariophysi</taxon>
        <taxon>Cypriniformes</taxon>
        <taxon>Danionidae</taxon>
        <taxon>Danioninae</taxon>
        <taxon>Danio</taxon>
    </lineage>
</organism>
<gene>
    <name type="primary">tpt1</name>
    <name type="synonym">tct1</name>
    <name type="synonym">tctp</name>
</gene>
<keyword id="KW-0106">Calcium</keyword>
<keyword id="KW-0963">Cytoplasm</keyword>
<keyword id="KW-1185">Reference proteome</keyword>
<sequence length="171" mass="19025">MIIYKDIITGDEMFSDIYKIKESENGMMLEVEGKMITRAEGDIDDALIGGNASAEVADEGCDSTSVSGVDIVLNHKLQETSYDKKSYTAYIKDYMKAVKAKLQESAPNRVDPFMANAPAEVKKILGNIKNFQFFTGESMNPDGMIGLLDFREDGVTPYMIFFKDGLEIEKC</sequence>
<dbReference type="EMBL" id="AF288217">
    <property type="protein sequence ID" value="AAF99708.1"/>
    <property type="molecule type" value="mRNA"/>
</dbReference>
<dbReference type="EMBL" id="BC049059">
    <property type="protein sequence ID" value="AAH49059.1"/>
    <property type="molecule type" value="mRNA"/>
</dbReference>
<dbReference type="RefSeq" id="NP_937783.1">
    <property type="nucleotide sequence ID" value="NM_198140.1"/>
</dbReference>
<dbReference type="SMR" id="Q9DGK4"/>
<dbReference type="FunCoup" id="Q9DGK4">
    <property type="interactions" value="2813"/>
</dbReference>
<dbReference type="STRING" id="7955.ENSDARP00000092887"/>
<dbReference type="PaxDb" id="7955-ENSDARP00000110449"/>
<dbReference type="DNASU" id="30723"/>
<dbReference type="Ensembl" id="ENSDART00000102111">
    <property type="protein sequence ID" value="ENSDARP00000092887"/>
    <property type="gene ID" value="ENSDARG00000092693"/>
</dbReference>
<dbReference type="GeneID" id="30723"/>
<dbReference type="KEGG" id="dre:30723"/>
<dbReference type="AGR" id="ZFIN:ZDB-GENE-990603-10"/>
<dbReference type="CTD" id="7178"/>
<dbReference type="ZFIN" id="ZDB-GENE-990603-10">
    <property type="gene designation" value="tpt1"/>
</dbReference>
<dbReference type="eggNOG" id="KOG1727">
    <property type="taxonomic scope" value="Eukaryota"/>
</dbReference>
<dbReference type="HOGENOM" id="CLU_095877_0_1_1"/>
<dbReference type="InParanoid" id="Q9DGK4"/>
<dbReference type="OMA" id="CAMITEG"/>
<dbReference type="OrthoDB" id="10248936at2759"/>
<dbReference type="PhylomeDB" id="Q9DGK4"/>
<dbReference type="TreeFam" id="TF300238"/>
<dbReference type="PRO" id="PR:Q9DGK4"/>
<dbReference type="Proteomes" id="UP000000437">
    <property type="component" value="Chromosome 1"/>
</dbReference>
<dbReference type="Bgee" id="ENSDARG00000092693">
    <property type="expression patterns" value="Expressed in gastrula and 25 other cell types or tissues"/>
</dbReference>
<dbReference type="ExpressionAtlas" id="Q9DGK4">
    <property type="expression patterns" value="baseline"/>
</dbReference>
<dbReference type="GO" id="GO:0005737">
    <property type="term" value="C:cytoplasm"/>
    <property type="evidence" value="ECO:0000318"/>
    <property type="project" value="GO_Central"/>
</dbReference>
<dbReference type="GO" id="GO:0005509">
    <property type="term" value="F:calcium ion binding"/>
    <property type="evidence" value="ECO:0000318"/>
    <property type="project" value="GO_Central"/>
</dbReference>
<dbReference type="FunFam" id="2.170.150.10:FF:000001">
    <property type="entry name" value="Tumor protein, translationally-controlled 1"/>
    <property type="match status" value="1"/>
</dbReference>
<dbReference type="Gene3D" id="2.170.150.10">
    <property type="entry name" value="Metal Binding Protein, Guanine Nucleotide Exchange Factor, Chain A"/>
    <property type="match status" value="1"/>
</dbReference>
<dbReference type="InterPro" id="IPR011057">
    <property type="entry name" value="Mss4-like_sf"/>
</dbReference>
<dbReference type="InterPro" id="IPR011323">
    <property type="entry name" value="Mss4/transl-control_tumour"/>
</dbReference>
<dbReference type="InterPro" id="IPR034737">
    <property type="entry name" value="TCTP"/>
</dbReference>
<dbReference type="InterPro" id="IPR018103">
    <property type="entry name" value="Translation_control_tumour_CS"/>
</dbReference>
<dbReference type="InterPro" id="IPR018105">
    <property type="entry name" value="Translational_control_tumour_p"/>
</dbReference>
<dbReference type="PANTHER" id="PTHR11991">
    <property type="entry name" value="TRANSLATIONALLY CONTROLLED TUMOR PROTEIN-RELATED"/>
    <property type="match status" value="1"/>
</dbReference>
<dbReference type="PANTHER" id="PTHR11991:SF0">
    <property type="entry name" value="TRANSLATIONALLY-CONTROLLED TUMOR PROTEIN"/>
    <property type="match status" value="1"/>
</dbReference>
<dbReference type="Pfam" id="PF00838">
    <property type="entry name" value="TCTP"/>
    <property type="match status" value="1"/>
</dbReference>
<dbReference type="PRINTS" id="PR01653">
    <property type="entry name" value="TCTPROTEIN"/>
</dbReference>
<dbReference type="SUPFAM" id="SSF51316">
    <property type="entry name" value="Mss4-like"/>
    <property type="match status" value="1"/>
</dbReference>
<dbReference type="PROSITE" id="PS01002">
    <property type="entry name" value="TCTP_1"/>
    <property type="match status" value="1"/>
</dbReference>
<dbReference type="PROSITE" id="PS01003">
    <property type="entry name" value="TCTP_2"/>
    <property type="match status" value="1"/>
</dbReference>
<dbReference type="PROSITE" id="PS51797">
    <property type="entry name" value="TCTP_3"/>
    <property type="match status" value="1"/>
</dbReference>
<proteinExistence type="evidence at transcript level"/>
<accession>Q9DGK4</accession>
<accession>Q7ZUG2</accession>